<feature type="chain" id="PRO_0000219924" description="UPF0335 protein BMEI0289">
    <location>
        <begin position="1"/>
        <end position="92"/>
    </location>
</feature>
<name>Y289_BRUME</name>
<accession>Q8YIZ8</accession>
<organism>
    <name type="scientific">Brucella melitensis biotype 1 (strain ATCC 23456 / CCUG 17765 / NCTC 10094 / 16M)</name>
    <dbReference type="NCBI Taxonomy" id="224914"/>
    <lineage>
        <taxon>Bacteria</taxon>
        <taxon>Pseudomonadati</taxon>
        <taxon>Pseudomonadota</taxon>
        <taxon>Alphaproteobacteria</taxon>
        <taxon>Hyphomicrobiales</taxon>
        <taxon>Brucellaceae</taxon>
        <taxon>Brucella/Ochrobactrum group</taxon>
        <taxon>Brucella</taxon>
    </lineage>
</organism>
<comment type="similarity">
    <text evidence="1">Belongs to the UPF0335 family.</text>
</comment>
<protein>
    <recommendedName>
        <fullName evidence="1">UPF0335 protein BMEI0289</fullName>
    </recommendedName>
</protein>
<reference key="1">
    <citation type="journal article" date="2002" name="Proc. Natl. Acad. Sci. U.S.A.">
        <title>The genome sequence of the facultative intracellular pathogen Brucella melitensis.</title>
        <authorList>
            <person name="DelVecchio V.G."/>
            <person name="Kapatral V."/>
            <person name="Redkar R.J."/>
            <person name="Patra G."/>
            <person name="Mujer C."/>
            <person name="Los T."/>
            <person name="Ivanova N."/>
            <person name="Anderson I."/>
            <person name="Bhattacharyya A."/>
            <person name="Lykidis A."/>
            <person name="Reznik G."/>
            <person name="Jablonski L."/>
            <person name="Larsen N."/>
            <person name="D'Souza M."/>
            <person name="Bernal A."/>
            <person name="Mazur M."/>
            <person name="Goltsman E."/>
            <person name="Selkov E."/>
            <person name="Elzer P.H."/>
            <person name="Hagius S."/>
            <person name="O'Callaghan D."/>
            <person name="Letesson J.-J."/>
            <person name="Haselkorn R."/>
            <person name="Kyrpides N.C."/>
            <person name="Overbeek R."/>
        </authorList>
    </citation>
    <scope>NUCLEOTIDE SEQUENCE [LARGE SCALE GENOMIC DNA]</scope>
    <source>
        <strain>ATCC 23456 / CCUG 17765 / NCTC 10094 / 16M</strain>
    </source>
</reference>
<dbReference type="EMBL" id="AE008917">
    <property type="protein sequence ID" value="AAL51470.1"/>
    <property type="molecule type" value="Genomic_DNA"/>
</dbReference>
<dbReference type="PIR" id="AC3288">
    <property type="entry name" value="AC3288"/>
</dbReference>
<dbReference type="SMR" id="Q8YIZ8"/>
<dbReference type="KEGG" id="bme:BMEI0289"/>
<dbReference type="eggNOG" id="COG3750">
    <property type="taxonomic scope" value="Bacteria"/>
</dbReference>
<dbReference type="Proteomes" id="UP000000419">
    <property type="component" value="Chromosome I"/>
</dbReference>
<dbReference type="GO" id="GO:0003677">
    <property type="term" value="F:DNA binding"/>
    <property type="evidence" value="ECO:0007669"/>
    <property type="project" value="InterPro"/>
</dbReference>
<dbReference type="HAMAP" id="MF_00797">
    <property type="entry name" value="UPF0335"/>
    <property type="match status" value="1"/>
</dbReference>
<dbReference type="InterPro" id="IPR018753">
    <property type="entry name" value="GapR-like"/>
</dbReference>
<dbReference type="InterPro" id="IPR046367">
    <property type="entry name" value="GapR-like_DNA-bd"/>
</dbReference>
<dbReference type="NCBIfam" id="NF010247">
    <property type="entry name" value="PRK13694.1"/>
    <property type="match status" value="1"/>
</dbReference>
<dbReference type="Pfam" id="PF10073">
    <property type="entry name" value="GapR_DNA-bd"/>
    <property type="match status" value="1"/>
</dbReference>
<sequence>MNWRNLVSDDITSEAQTIAVGQLRAFIERIERLEEEKKTIGDDIKEVYAELKGSGFDSKVVRTIIRLRKKEDHERQEEEAMLQLYMDALGMS</sequence>
<proteinExistence type="inferred from homology"/>
<evidence type="ECO:0000255" key="1">
    <source>
        <dbReference type="HAMAP-Rule" id="MF_00797"/>
    </source>
</evidence>
<gene>
    <name type="ordered locus">BMEI0289</name>
</gene>